<protein>
    <recommendedName>
        <fullName>D-alanyl-D-alanine carboxypeptidase DacC</fullName>
        <shortName>DD-carboxypeptidase</shortName>
        <shortName>DD-peptidase</shortName>
        <ecNumber>3.4.16.4</ecNumber>
    </recommendedName>
    <alternativeName>
        <fullName>Penicillin-binding protein 6</fullName>
        <shortName>PBP-6</shortName>
    </alternativeName>
</protein>
<evidence type="ECO:0000250" key="1"/>
<evidence type="ECO:0000269" key="2">
    <source>
    </source>
</evidence>
<evidence type="ECO:0000269" key="3">
    <source>
    </source>
</evidence>
<evidence type="ECO:0000305" key="4"/>
<evidence type="ECO:0007829" key="5">
    <source>
        <dbReference type="PDB" id="3ITA"/>
    </source>
</evidence>
<evidence type="ECO:0007829" key="6">
    <source>
        <dbReference type="PDB" id="3ITB"/>
    </source>
</evidence>
<name>DACC_ECOLI</name>
<organism>
    <name type="scientific">Escherichia coli (strain K12)</name>
    <dbReference type="NCBI Taxonomy" id="83333"/>
    <lineage>
        <taxon>Bacteria</taxon>
        <taxon>Pseudomonadati</taxon>
        <taxon>Pseudomonadota</taxon>
        <taxon>Gammaproteobacteria</taxon>
        <taxon>Enterobacterales</taxon>
        <taxon>Enterobacteriaceae</taxon>
        <taxon>Escherichia</taxon>
    </lineage>
</organism>
<gene>
    <name type="primary">dacC</name>
    <name type="ordered locus">b0839</name>
    <name type="ordered locus">JW0823</name>
</gene>
<dbReference type="EC" id="3.4.16.4"/>
<dbReference type="EMBL" id="X06480">
    <property type="protein sequence ID" value="CAA29775.1"/>
    <property type="molecule type" value="Genomic_DNA"/>
</dbReference>
<dbReference type="EMBL" id="U00096">
    <property type="protein sequence ID" value="AAC73926.1"/>
    <property type="molecule type" value="Genomic_DNA"/>
</dbReference>
<dbReference type="EMBL" id="AP009048">
    <property type="protein sequence ID" value="BAA35542.1"/>
    <property type="molecule type" value="Genomic_DNA"/>
</dbReference>
<dbReference type="PIR" id="G64821">
    <property type="entry name" value="G64821"/>
</dbReference>
<dbReference type="RefSeq" id="NP_415360.1">
    <property type="nucleotide sequence ID" value="NC_000913.3"/>
</dbReference>
<dbReference type="RefSeq" id="WP_001300708.1">
    <property type="nucleotide sequence ID" value="NZ_SSZK01000002.1"/>
</dbReference>
<dbReference type="PDB" id="3IT9">
    <property type="method" value="X-ray"/>
    <property type="resolution" value="2.10 A"/>
    <property type="chains" value="A/B/C/D=28-378"/>
</dbReference>
<dbReference type="PDB" id="3ITA">
    <property type="method" value="X-ray"/>
    <property type="resolution" value="1.80 A"/>
    <property type="chains" value="A/B/C/D=28-378"/>
</dbReference>
<dbReference type="PDB" id="3ITB">
    <property type="method" value="X-ray"/>
    <property type="resolution" value="1.80 A"/>
    <property type="chains" value="A/B/C/D=28-378"/>
</dbReference>
<dbReference type="PDBsum" id="3IT9"/>
<dbReference type="PDBsum" id="3ITA"/>
<dbReference type="PDBsum" id="3ITB"/>
<dbReference type="SMR" id="P08506"/>
<dbReference type="BioGRID" id="4262825">
    <property type="interactions" value="229"/>
</dbReference>
<dbReference type="FunCoup" id="P08506">
    <property type="interactions" value="409"/>
</dbReference>
<dbReference type="IntAct" id="P08506">
    <property type="interactions" value="2"/>
</dbReference>
<dbReference type="MINT" id="P08506"/>
<dbReference type="STRING" id="511145.b0839"/>
<dbReference type="ChEMBL" id="CHEMBL2354204"/>
<dbReference type="DrugBank" id="DB01602">
    <property type="generic name" value="Bacampicillin"/>
</dbReference>
<dbReference type="DrugBank" id="DB00578">
    <property type="generic name" value="Carbenicillin"/>
</dbReference>
<dbReference type="DrugBank" id="DB09319">
    <property type="generic name" value="Carindacillin"/>
</dbReference>
<dbReference type="DrugBank" id="DB00671">
    <property type="generic name" value="Cefixime"/>
</dbReference>
<dbReference type="DrugBank" id="DB00274">
    <property type="generic name" value="Cefmetazole"/>
</dbReference>
<dbReference type="DrugBank" id="DB01329">
    <property type="generic name" value="Cefoperazone"/>
</dbReference>
<dbReference type="DrugBank" id="DB01331">
    <property type="generic name" value="Cefoxitin"/>
</dbReference>
<dbReference type="DrugBank" id="DB00430">
    <property type="generic name" value="Cefpiramide"/>
</dbReference>
<dbReference type="DrugBank" id="DB06590">
    <property type="generic name" value="Ceftaroline fosamil"/>
</dbReference>
<dbReference type="DrugBank" id="DB01332">
    <property type="generic name" value="Ceftizoxime"/>
</dbReference>
<dbReference type="DrugBank" id="DB09050">
    <property type="generic name" value="Ceftolozane"/>
</dbReference>
<dbReference type="DrugBank" id="DB01000">
    <property type="generic name" value="Cyclacillin"/>
</dbReference>
<dbReference type="DrugBank" id="DB00303">
    <property type="generic name" value="Ertapenem"/>
</dbReference>
<dbReference type="DrugBank" id="DB09320">
    <property type="generic name" value="Procaine benzylpenicillin"/>
</dbReference>
<dbReference type="DrugBank" id="DB16335">
    <property type="generic name" value="Sulopenem etzadroxil"/>
</dbReference>
<dbReference type="DrugCentral" id="P08506"/>
<dbReference type="MEROPS" id="S11.003"/>
<dbReference type="jPOST" id="P08506"/>
<dbReference type="PaxDb" id="511145-b0839"/>
<dbReference type="EnsemblBacteria" id="AAC73926">
    <property type="protein sequence ID" value="AAC73926"/>
    <property type="gene ID" value="b0839"/>
</dbReference>
<dbReference type="GeneID" id="945455"/>
<dbReference type="KEGG" id="ecj:JW0823"/>
<dbReference type="KEGG" id="eco:b0839"/>
<dbReference type="KEGG" id="ecoc:C3026_05250"/>
<dbReference type="PATRIC" id="fig|1411691.4.peg.1439"/>
<dbReference type="EchoBASE" id="EB0199"/>
<dbReference type="eggNOG" id="COG1686">
    <property type="taxonomic scope" value="Bacteria"/>
</dbReference>
<dbReference type="HOGENOM" id="CLU_027070_8_1_6"/>
<dbReference type="InParanoid" id="P08506"/>
<dbReference type="OMA" id="WKMPGSR"/>
<dbReference type="OrthoDB" id="9795979at2"/>
<dbReference type="PhylomeDB" id="P08506"/>
<dbReference type="BioCyc" id="EcoCyc:EG10203-MONOMER"/>
<dbReference type="BioCyc" id="MetaCyc:EG10203-MONOMER"/>
<dbReference type="UniPathway" id="UPA00219"/>
<dbReference type="EvolutionaryTrace" id="P08506"/>
<dbReference type="PRO" id="PR:P08506"/>
<dbReference type="Proteomes" id="UP000000625">
    <property type="component" value="Chromosome"/>
</dbReference>
<dbReference type="GO" id="GO:0030288">
    <property type="term" value="C:outer membrane-bounded periplasmic space"/>
    <property type="evidence" value="ECO:0000314"/>
    <property type="project" value="EcoCyc"/>
</dbReference>
<dbReference type="GO" id="GO:0005886">
    <property type="term" value="C:plasma membrane"/>
    <property type="evidence" value="ECO:0000314"/>
    <property type="project" value="EcoCyc"/>
</dbReference>
<dbReference type="GO" id="GO:0004180">
    <property type="term" value="F:carboxypeptidase activity"/>
    <property type="evidence" value="ECO:0000314"/>
    <property type="project" value="EcoCyc"/>
</dbReference>
<dbReference type="GO" id="GO:0008658">
    <property type="term" value="F:penicillin binding"/>
    <property type="evidence" value="ECO:0000314"/>
    <property type="project" value="EcoCyc"/>
</dbReference>
<dbReference type="GO" id="GO:0042803">
    <property type="term" value="F:protein homodimerization activity"/>
    <property type="evidence" value="ECO:0000314"/>
    <property type="project" value="EcoCyc"/>
</dbReference>
<dbReference type="GO" id="GO:0009002">
    <property type="term" value="F:serine-type D-Ala-D-Ala carboxypeptidase activity"/>
    <property type="evidence" value="ECO:0000255"/>
    <property type="project" value="EcoCyc"/>
</dbReference>
<dbReference type="GO" id="GO:0071555">
    <property type="term" value="P:cell wall organization"/>
    <property type="evidence" value="ECO:0007669"/>
    <property type="project" value="UniProtKB-KW"/>
</dbReference>
<dbReference type="GO" id="GO:0009252">
    <property type="term" value="P:peptidoglycan biosynthetic process"/>
    <property type="evidence" value="ECO:0000314"/>
    <property type="project" value="EcoCyc"/>
</dbReference>
<dbReference type="GO" id="GO:0006508">
    <property type="term" value="P:proteolysis"/>
    <property type="evidence" value="ECO:0007669"/>
    <property type="project" value="UniProtKB-KW"/>
</dbReference>
<dbReference type="GO" id="GO:0008360">
    <property type="term" value="P:regulation of cell shape"/>
    <property type="evidence" value="ECO:0000316"/>
    <property type="project" value="EcoCyc"/>
</dbReference>
<dbReference type="GO" id="GO:0009410">
    <property type="term" value="P:response to xenobiotic stimulus"/>
    <property type="evidence" value="ECO:0000315"/>
    <property type="project" value="EcoCyc"/>
</dbReference>
<dbReference type="FunFam" id="2.60.410.10:FF:000001">
    <property type="entry name" value="D-alanyl-D-alanine carboxypeptidase dacA"/>
    <property type="match status" value="1"/>
</dbReference>
<dbReference type="FunFam" id="3.40.710.10:FF:000001">
    <property type="entry name" value="D-alanyl-D-alanine serine-type carboxypeptidase"/>
    <property type="match status" value="1"/>
</dbReference>
<dbReference type="Gene3D" id="2.60.410.10">
    <property type="entry name" value="D-Ala-D-Ala carboxypeptidase, C-terminal domain"/>
    <property type="match status" value="1"/>
</dbReference>
<dbReference type="Gene3D" id="3.40.710.10">
    <property type="entry name" value="DD-peptidase/beta-lactamase superfamily"/>
    <property type="match status" value="1"/>
</dbReference>
<dbReference type="InterPro" id="IPR012338">
    <property type="entry name" value="Beta-lactam/transpept-like"/>
</dbReference>
<dbReference type="InterPro" id="IPR015956">
    <property type="entry name" value="Peniciliin-bd_prot_C_sf"/>
</dbReference>
<dbReference type="InterPro" id="IPR018044">
    <property type="entry name" value="Peptidase_S11"/>
</dbReference>
<dbReference type="InterPro" id="IPR012907">
    <property type="entry name" value="Peptidase_S11_C"/>
</dbReference>
<dbReference type="InterPro" id="IPR037167">
    <property type="entry name" value="Peptidase_S11_C_sf"/>
</dbReference>
<dbReference type="InterPro" id="IPR001967">
    <property type="entry name" value="Peptidase_S11_N"/>
</dbReference>
<dbReference type="NCBIfam" id="NF007445">
    <property type="entry name" value="PRK10001.1"/>
    <property type="match status" value="1"/>
</dbReference>
<dbReference type="PANTHER" id="PTHR21581">
    <property type="entry name" value="D-ALANYL-D-ALANINE CARBOXYPEPTIDASE"/>
    <property type="match status" value="1"/>
</dbReference>
<dbReference type="PANTHER" id="PTHR21581:SF6">
    <property type="entry name" value="TRAFFICKING PROTEIN PARTICLE COMPLEX SUBUNIT 12"/>
    <property type="match status" value="1"/>
</dbReference>
<dbReference type="Pfam" id="PF07943">
    <property type="entry name" value="PBP5_C"/>
    <property type="match status" value="1"/>
</dbReference>
<dbReference type="Pfam" id="PF00768">
    <property type="entry name" value="Peptidase_S11"/>
    <property type="match status" value="1"/>
</dbReference>
<dbReference type="PRINTS" id="PR00725">
    <property type="entry name" value="DADACBPTASE1"/>
</dbReference>
<dbReference type="SMART" id="SM00936">
    <property type="entry name" value="PBP5_C"/>
    <property type="match status" value="1"/>
</dbReference>
<dbReference type="SUPFAM" id="SSF56601">
    <property type="entry name" value="beta-lactamase/transpeptidase-like"/>
    <property type="match status" value="1"/>
</dbReference>
<dbReference type="SUPFAM" id="SSF69189">
    <property type="entry name" value="Penicillin-binding protein associated domain"/>
    <property type="match status" value="1"/>
</dbReference>
<keyword id="KW-0002">3D-structure</keyword>
<keyword id="KW-0121">Carboxypeptidase</keyword>
<keyword id="KW-0997">Cell inner membrane</keyword>
<keyword id="KW-1003">Cell membrane</keyword>
<keyword id="KW-0133">Cell shape</keyword>
<keyword id="KW-0961">Cell wall biogenesis/degradation</keyword>
<keyword id="KW-0903">Direct protein sequencing</keyword>
<keyword id="KW-0378">Hydrolase</keyword>
<keyword id="KW-0472">Membrane</keyword>
<keyword id="KW-0573">Peptidoglycan synthesis</keyword>
<keyword id="KW-0645">Protease</keyword>
<keyword id="KW-1185">Reference proteome</keyword>
<keyword id="KW-0732">Signal</keyword>
<sequence length="400" mass="43609">MTQYSSLLRGLAAGSAFLFLFAPTAFAAEQTVEAPSVDARAWILMDYASGKVLAEGNADEKLDPASLTKIMTSYVVGQALKADKIKLTDMVTVGKDAWATGNPALRGSSVMFLKPGDQVSVADLNKGVIIQSGNDACIALADYVAGSQESFIGLMNGYAKKLGLTNTTFQTVHGLDAPGQFSTARDMALLGKALIHDVPEEYAIHKEKEFTFNKIRQPNRNRLLWSSNLNVDGMKTGTTAGAGYNLVASATQGDMRLISVVLGAKTDRIRFNESEKLLTWGFRFFETVTPIKPDATFVTQRVWFGDKSEVNLGAGEAGSVTIPRGQLKNLKASYTLTEPQLTAPLKKGQVVGTIDFQLNGKSIEQRPLIVMENVEEGGFFGRVWDFVMMKFHQWFGSWFS</sequence>
<proteinExistence type="evidence at protein level"/>
<reference key="1">
    <citation type="journal article" date="1988" name="Nucleic Acids Res.">
        <title>Nucleotide sequences of the penicillin-binding protein 5 and 6 genes of Escherichia coli.</title>
        <authorList>
            <person name="Broome-Smith J.K."/>
            <person name="Ioannidis I."/>
            <person name="Edelman A."/>
            <person name="Spratt B.G."/>
        </authorList>
    </citation>
    <scope>NUCLEOTIDE SEQUENCE [GENOMIC DNA]</scope>
    <source>
        <strain>K12</strain>
    </source>
</reference>
<reference key="2">
    <citation type="journal article" date="1996" name="DNA Res.">
        <title>A 718-kb DNA sequence of the Escherichia coli K-12 genome corresponding to the 12.7-28.0 min region on the linkage map.</title>
        <authorList>
            <person name="Oshima T."/>
            <person name="Aiba H."/>
            <person name="Baba T."/>
            <person name="Fujita K."/>
            <person name="Hayashi K."/>
            <person name="Honjo A."/>
            <person name="Ikemoto K."/>
            <person name="Inada T."/>
            <person name="Itoh T."/>
            <person name="Kajihara M."/>
            <person name="Kanai K."/>
            <person name="Kashimoto K."/>
            <person name="Kimura S."/>
            <person name="Kitagawa M."/>
            <person name="Makino K."/>
            <person name="Masuda S."/>
            <person name="Miki T."/>
            <person name="Mizobuchi K."/>
            <person name="Mori H."/>
            <person name="Motomura K."/>
            <person name="Nakamura Y."/>
            <person name="Nashimoto H."/>
            <person name="Nishio Y."/>
            <person name="Saito N."/>
            <person name="Sampei G."/>
            <person name="Seki Y."/>
            <person name="Tagami H."/>
            <person name="Takemoto K."/>
            <person name="Wada C."/>
            <person name="Yamamoto Y."/>
            <person name="Yano M."/>
            <person name="Horiuchi T."/>
        </authorList>
    </citation>
    <scope>NUCLEOTIDE SEQUENCE [LARGE SCALE GENOMIC DNA]</scope>
    <source>
        <strain>K12 / W3110 / ATCC 27325 / DSM 5911</strain>
    </source>
</reference>
<reference key="3">
    <citation type="journal article" date="1997" name="Science">
        <title>The complete genome sequence of Escherichia coli K-12.</title>
        <authorList>
            <person name="Blattner F.R."/>
            <person name="Plunkett G. III"/>
            <person name="Bloch C.A."/>
            <person name="Perna N.T."/>
            <person name="Burland V."/>
            <person name="Riley M."/>
            <person name="Collado-Vides J."/>
            <person name="Glasner J.D."/>
            <person name="Rode C.K."/>
            <person name="Mayhew G.F."/>
            <person name="Gregor J."/>
            <person name="Davis N.W."/>
            <person name="Kirkpatrick H.A."/>
            <person name="Goeden M.A."/>
            <person name="Rose D.J."/>
            <person name="Mau B."/>
            <person name="Shao Y."/>
        </authorList>
    </citation>
    <scope>NUCLEOTIDE SEQUENCE [LARGE SCALE GENOMIC DNA]</scope>
    <source>
        <strain>K12 / MG1655 / ATCC 47076</strain>
    </source>
</reference>
<reference key="4">
    <citation type="journal article" date="2006" name="Mol. Syst. Biol.">
        <title>Highly accurate genome sequences of Escherichia coli K-12 strains MG1655 and W3110.</title>
        <authorList>
            <person name="Hayashi K."/>
            <person name="Morooka N."/>
            <person name="Yamamoto Y."/>
            <person name="Fujita K."/>
            <person name="Isono K."/>
            <person name="Choi S."/>
            <person name="Ohtsubo E."/>
            <person name="Baba T."/>
            <person name="Wanner B.L."/>
            <person name="Mori H."/>
            <person name="Horiuchi T."/>
        </authorList>
    </citation>
    <scope>NUCLEOTIDE SEQUENCE [LARGE SCALE GENOMIC DNA]</scope>
    <source>
        <strain>K12 / W3110 / ATCC 27325 / DSM 5911</strain>
    </source>
</reference>
<reference key="5">
    <citation type="journal article" date="1982" name="FEBS Lett.">
        <title>Amino acid sequence homologies between Escherichia coli penicillin-binding protein 5 and class A beta-lactamases.</title>
        <authorList>
            <person name="Waxman D.J."/>
            <person name="Amanuma H."/>
            <person name="Strominger J.L."/>
        </authorList>
    </citation>
    <scope>PROTEIN SEQUENCE OF 28-52</scope>
</reference>
<reference key="6">
    <citation type="journal article" date="1987" name="Mol. Microbiol.">
        <title>An 18 amino acid amphiphilic helix forms the membrane-anchoring domain of the Escherichia coli penicillin-binding protein 5.</title>
        <authorList>
            <person name="Jackson M.E."/>
            <person name="Pratt J.M."/>
        </authorList>
    </citation>
    <scope>SUBCELLULAR LOCATION</scope>
    <scope>DOMAIN</scope>
</reference>
<comment type="function">
    <text>Removes C-terminal D-alanyl residues from sugar-peptide cell wall precursors.</text>
</comment>
<comment type="catalytic activity">
    <reaction>
        <text>Preferential cleavage: (Ac)2-L-Lys-D-Ala-|-D-Ala. Also transpeptidation of peptidyl-alanyl moieties that are N-acyl substituents of D-alanine.</text>
        <dbReference type="EC" id="3.4.16.4"/>
    </reaction>
</comment>
<comment type="pathway">
    <text>Cell wall biogenesis; peptidoglycan biosynthesis.</text>
</comment>
<comment type="subcellular location">
    <subcellularLocation>
        <location evidence="2">Cell inner membrane</location>
        <topology evidence="2">Peripheral membrane protein</topology>
        <orientation evidence="2">Periplasmic side</orientation>
    </subcellularLocation>
    <text>N-terminus lies in the periplasmic space, targeted there by the C-terminal amphiphilic helix (PMID:3330754).</text>
</comment>
<comment type="domain">
    <text evidence="2">The C-terminus forms an amphiphilic helix that targets the protein to the periplasmic side of the inner cell membrane.</text>
</comment>
<comment type="similarity">
    <text evidence="4">Belongs to the peptidase S11 family.</text>
</comment>
<feature type="signal peptide" evidence="3">
    <location>
        <begin position="1"/>
        <end position="27"/>
    </location>
</feature>
<feature type="chain" id="PRO_0000027233" description="D-alanyl-D-alanine carboxypeptidase DacC">
    <location>
        <begin position="28"/>
        <end position="400"/>
    </location>
</feature>
<feature type="region of interest" description="Required for inner membrane binding">
    <location>
        <begin position="383"/>
        <end position="400"/>
    </location>
</feature>
<feature type="active site" description="Acyl-ester intermediate" evidence="1">
    <location>
        <position position="66"/>
    </location>
</feature>
<feature type="active site" description="Proton acceptor" evidence="1">
    <location>
        <position position="69"/>
    </location>
</feature>
<feature type="active site" evidence="1">
    <location>
        <position position="132"/>
    </location>
</feature>
<feature type="binding site" evidence="1">
    <location>
        <position position="235"/>
    </location>
    <ligand>
        <name>substrate</name>
    </ligand>
</feature>
<feature type="sequence conflict" description="In Ref. 1; CAA29775." evidence="4" ref="1">
    <original>V</original>
    <variation>E</variation>
    <location>
        <position position="231"/>
    </location>
</feature>
<feature type="strand" evidence="5">
    <location>
        <begin position="39"/>
        <end position="46"/>
    </location>
</feature>
<feature type="turn" evidence="5">
    <location>
        <begin position="47"/>
        <end position="49"/>
    </location>
</feature>
<feature type="strand" evidence="5">
    <location>
        <begin position="52"/>
        <end position="57"/>
    </location>
</feature>
<feature type="helix" evidence="5">
    <location>
        <begin position="65"/>
        <end position="67"/>
    </location>
</feature>
<feature type="helix" evidence="5">
    <location>
        <begin position="68"/>
        <end position="81"/>
    </location>
</feature>
<feature type="strand" evidence="5">
    <location>
        <begin position="90"/>
        <end position="92"/>
    </location>
</feature>
<feature type="helix" evidence="5">
    <location>
        <begin position="95"/>
        <end position="97"/>
    </location>
</feature>
<feature type="turn" evidence="5">
    <location>
        <begin position="99"/>
        <end position="101"/>
    </location>
</feature>
<feature type="helix" evidence="5">
    <location>
        <begin position="103"/>
        <end position="105"/>
    </location>
</feature>
<feature type="strand" evidence="5">
    <location>
        <begin position="118"/>
        <end position="120"/>
    </location>
</feature>
<feature type="helix" evidence="5">
    <location>
        <begin position="121"/>
        <end position="129"/>
    </location>
</feature>
<feature type="helix" evidence="5">
    <location>
        <begin position="134"/>
        <end position="145"/>
    </location>
</feature>
<feature type="helix" evidence="5">
    <location>
        <begin position="148"/>
        <end position="161"/>
    </location>
</feature>
<feature type="strand" evidence="6">
    <location>
        <begin position="171"/>
        <end position="173"/>
    </location>
</feature>
<feature type="helix" evidence="5">
    <location>
        <begin position="184"/>
        <end position="197"/>
    </location>
</feature>
<feature type="helix" evidence="5">
    <location>
        <begin position="199"/>
        <end position="202"/>
    </location>
</feature>
<feature type="helix" evidence="5">
    <location>
        <begin position="203"/>
        <end position="206"/>
    </location>
</feature>
<feature type="strand" evidence="5">
    <location>
        <begin position="209"/>
        <end position="212"/>
    </location>
</feature>
<feature type="strand" evidence="5">
    <location>
        <begin position="215"/>
        <end position="218"/>
    </location>
</feature>
<feature type="helix" evidence="5">
    <location>
        <begin position="222"/>
        <end position="225"/>
    </location>
</feature>
<feature type="strand" evidence="5">
    <location>
        <begin position="230"/>
        <end position="239"/>
    </location>
</feature>
<feature type="turn" evidence="5">
    <location>
        <begin position="240"/>
        <end position="242"/>
    </location>
</feature>
<feature type="strand" evidence="5">
    <location>
        <begin position="243"/>
        <end position="252"/>
    </location>
</feature>
<feature type="strand" evidence="5">
    <location>
        <begin position="255"/>
        <end position="266"/>
    </location>
</feature>
<feature type="helix" evidence="5">
    <location>
        <begin position="267"/>
        <end position="284"/>
    </location>
</feature>
<feature type="strand" evidence="5">
    <location>
        <begin position="285"/>
        <end position="288"/>
    </location>
</feature>
<feature type="strand" evidence="5">
    <location>
        <begin position="297"/>
        <end position="313"/>
    </location>
</feature>
<feature type="helix" evidence="5">
    <location>
        <begin position="315"/>
        <end position="317"/>
    </location>
</feature>
<feature type="strand" evidence="5">
    <location>
        <begin position="320"/>
        <end position="323"/>
    </location>
</feature>
<feature type="helix" evidence="5">
    <location>
        <begin position="327"/>
        <end position="329"/>
    </location>
</feature>
<feature type="strand" evidence="5">
    <location>
        <begin position="330"/>
        <end position="343"/>
    </location>
</feature>
<feature type="strand" evidence="5">
    <location>
        <begin position="350"/>
        <end position="358"/>
    </location>
</feature>
<feature type="strand" evidence="5">
    <location>
        <begin position="361"/>
        <end position="370"/>
    </location>
</feature>
<accession>P08506</accession>
<accession>P77287</accession>